<accession>P14995</accession>
<dbReference type="EC" id="2.1.3.3" evidence="1"/>
<dbReference type="EMBL" id="X15412">
    <property type="protein sequence ID" value="CAA33458.1"/>
    <property type="molecule type" value="Genomic_DNA"/>
</dbReference>
<dbReference type="PIR" id="S08643">
    <property type="entry name" value="OWCKPT"/>
</dbReference>
<dbReference type="SMR" id="P14995"/>
<dbReference type="UniPathway" id="UPA00068">
    <property type="reaction ID" value="UER00112"/>
</dbReference>
<dbReference type="GO" id="GO:0005759">
    <property type="term" value="C:mitochondrial matrix"/>
    <property type="evidence" value="ECO:0007669"/>
    <property type="project" value="UniProtKB-SubCell"/>
</dbReference>
<dbReference type="GO" id="GO:0016597">
    <property type="term" value="F:amino acid binding"/>
    <property type="evidence" value="ECO:0007669"/>
    <property type="project" value="InterPro"/>
</dbReference>
<dbReference type="GO" id="GO:0004585">
    <property type="term" value="F:ornithine carbamoyltransferase activity"/>
    <property type="evidence" value="ECO:0007669"/>
    <property type="project" value="UniProtKB-EC"/>
</dbReference>
<dbReference type="GO" id="GO:0042450">
    <property type="term" value="P:arginine biosynthetic process via ornithine"/>
    <property type="evidence" value="ECO:0007669"/>
    <property type="project" value="TreeGrafter"/>
</dbReference>
<dbReference type="GO" id="GO:0019240">
    <property type="term" value="P:citrulline biosynthetic process"/>
    <property type="evidence" value="ECO:0007669"/>
    <property type="project" value="TreeGrafter"/>
</dbReference>
<dbReference type="GO" id="GO:0006526">
    <property type="term" value="P:L-arginine biosynthetic process"/>
    <property type="evidence" value="ECO:0007669"/>
    <property type="project" value="UniProtKB-UniPathway"/>
</dbReference>
<dbReference type="FunFam" id="3.40.50.1370:FF:000009">
    <property type="entry name" value="Ornithine carbamoyltransferase, mitochondrial"/>
    <property type="match status" value="1"/>
</dbReference>
<dbReference type="Gene3D" id="3.40.50.1370">
    <property type="entry name" value="Aspartate/ornithine carbamoyltransferase"/>
    <property type="match status" value="2"/>
</dbReference>
<dbReference type="InterPro" id="IPR006132">
    <property type="entry name" value="Asp/Orn_carbamoyltranf_P-bd"/>
</dbReference>
<dbReference type="InterPro" id="IPR006130">
    <property type="entry name" value="Asp/Orn_carbamoylTrfase"/>
</dbReference>
<dbReference type="InterPro" id="IPR036901">
    <property type="entry name" value="Asp/Orn_carbamoylTrfase_sf"/>
</dbReference>
<dbReference type="InterPro" id="IPR006131">
    <property type="entry name" value="Asp_carbamoyltransf_Asp/Orn-bd"/>
</dbReference>
<dbReference type="InterPro" id="IPR002292">
    <property type="entry name" value="Orn/put_carbamltrans"/>
</dbReference>
<dbReference type="NCBIfam" id="TIGR00658">
    <property type="entry name" value="orni_carb_tr"/>
    <property type="match status" value="1"/>
</dbReference>
<dbReference type="NCBIfam" id="NF001986">
    <property type="entry name" value="PRK00779.1"/>
    <property type="match status" value="1"/>
</dbReference>
<dbReference type="PANTHER" id="PTHR45753">
    <property type="entry name" value="ORNITHINE CARBAMOYLTRANSFERASE, MITOCHONDRIAL"/>
    <property type="match status" value="1"/>
</dbReference>
<dbReference type="PANTHER" id="PTHR45753:SF3">
    <property type="entry name" value="ORNITHINE TRANSCARBAMYLASE, MITOCHONDRIAL"/>
    <property type="match status" value="1"/>
</dbReference>
<dbReference type="Pfam" id="PF00185">
    <property type="entry name" value="OTCace"/>
    <property type="match status" value="1"/>
</dbReference>
<dbReference type="Pfam" id="PF02729">
    <property type="entry name" value="OTCace_N"/>
    <property type="match status" value="1"/>
</dbReference>
<dbReference type="PRINTS" id="PR00100">
    <property type="entry name" value="AOTCASE"/>
</dbReference>
<dbReference type="PRINTS" id="PR00102">
    <property type="entry name" value="OTCASE"/>
</dbReference>
<dbReference type="SUPFAM" id="SSF53671">
    <property type="entry name" value="Aspartate/ornithine carbamoyltransferase"/>
    <property type="match status" value="1"/>
</dbReference>
<dbReference type="PROSITE" id="PS00097">
    <property type="entry name" value="CARBAMOYLTRANSFERASE"/>
    <property type="match status" value="1"/>
</dbReference>
<comment type="catalytic activity">
    <reaction>
        <text>carbamoyl phosphate + L-ornithine = L-citrulline + phosphate + H(+)</text>
        <dbReference type="Rhea" id="RHEA:19513"/>
        <dbReference type="ChEBI" id="CHEBI:15378"/>
        <dbReference type="ChEBI" id="CHEBI:43474"/>
        <dbReference type="ChEBI" id="CHEBI:46911"/>
        <dbReference type="ChEBI" id="CHEBI:57743"/>
        <dbReference type="ChEBI" id="CHEBI:58228"/>
        <dbReference type="EC" id="2.1.3.3"/>
    </reaction>
</comment>
<comment type="pathway">
    <text>Amino-acid biosynthesis; L-arginine biosynthesis; L-arginine from L-ornithine and carbamoyl phosphate: step 1/3.</text>
</comment>
<comment type="subcellular location">
    <subcellularLocation>
        <location>Mitochondrion matrix</location>
    </subcellularLocation>
</comment>
<comment type="similarity">
    <text evidence="3">Belongs to the aspartate/ornithine carbamoyltransferase superfamily. OTCase family.</text>
</comment>
<evidence type="ECO:0000250" key="1">
    <source>
        <dbReference type="UniProtKB" id="P00480"/>
    </source>
</evidence>
<evidence type="ECO:0000303" key="2">
    <source>
    </source>
</evidence>
<evidence type="ECO:0000305" key="3"/>
<evidence type="ECO:0000305" key="4">
    <source>
    </source>
</evidence>
<sequence>MINSISNTVLLKSVVSKRFFSSSAKMSSQAKPRHLVSMLELSIKELESLVNRAAYHKQQIRSGLVNTTQPLSGKTVSLIFNKRSTRTRVSSEGAAAYLGGCPMFLGKDDIQLGVNESLHDTTKIISSMTSSIFARVNKHSDIQEMCKYSSVPIINALCDTFHPLQAITDILTIKESFGNTTKGLKLAWIGDVNNVINDLCIAALKSGIDVSIAVPSGLKFEELILSGAKEISAENGTTLKITNDPLEAINGANVIVTDTWISMGQEDERLQKLKQFEGFQITKEMISKGKAAENWKFMHCLPRHPEEVHDEVFYDEERSLVFEEGENRLYAAIAVLEGFVVNKGKLL</sequence>
<gene>
    <name type="primary">OTC</name>
</gene>
<name>OTC_PACTA</name>
<reference key="1">
    <citation type="journal article" date="1990" name="Yeast">
        <title>Cloning and sequencing of the ornithine carbamoyltransferase gene from Pachysolen tannophilus.</title>
        <authorList>
            <person name="Skrzypek M."/>
            <person name="Borsuk P."/>
            <person name="Maleszka R."/>
        </authorList>
    </citation>
    <scope>NUCLEOTIDE SEQUENCE [GENOMIC DNA]</scope>
    <source>
        <strain>ATCC 32691 / BCRC 20329 / CBS 4044 / DSM 70352 / NBRC 1007 / NRRL Y-2460</strain>
    </source>
</reference>
<keyword id="KW-0028">Amino-acid biosynthesis</keyword>
<keyword id="KW-0055">Arginine biosynthesis</keyword>
<keyword id="KW-0496">Mitochondrion</keyword>
<keyword id="KW-0808">Transferase</keyword>
<keyword id="KW-0809">Transit peptide</keyword>
<feature type="transit peptide" description="Mitochondrion">
    <location>
        <begin position="1"/>
        <end position="25"/>
    </location>
</feature>
<feature type="chain" id="PRO_0000020345" description="Ornithine transcarbamylase, mitochondrial">
    <location>
        <begin position="26"/>
        <end position="347"/>
    </location>
</feature>
<feature type="active site" description="Proton acceptor" evidence="1">
    <location>
        <position position="300"/>
    </location>
</feature>
<feature type="binding site" evidence="1">
    <location>
        <begin position="84"/>
        <end position="87"/>
    </location>
    <ligand>
        <name>carbamoyl phosphate</name>
        <dbReference type="ChEBI" id="CHEBI:58228"/>
    </ligand>
</feature>
<feature type="binding site" evidence="1">
    <location>
        <position position="135"/>
    </location>
    <ligand>
        <name>carbamoyl phosphate</name>
        <dbReference type="ChEBI" id="CHEBI:58228"/>
    </ligand>
</feature>
<feature type="binding site" evidence="1">
    <location>
        <position position="162"/>
    </location>
    <ligand>
        <name>carbamoyl phosphate</name>
        <dbReference type="ChEBI" id="CHEBI:58228"/>
    </ligand>
</feature>
<feature type="binding site" evidence="1">
    <location>
        <position position="165"/>
    </location>
    <ligand>
        <name>carbamoyl phosphate</name>
        <dbReference type="ChEBI" id="CHEBI:58228"/>
    </ligand>
</feature>
<feature type="binding site" evidence="1">
    <location>
        <position position="194"/>
    </location>
    <ligand>
        <name>L-ornithine</name>
        <dbReference type="ChEBI" id="CHEBI:46911"/>
    </ligand>
</feature>
<feature type="binding site" evidence="1">
    <location>
        <position position="258"/>
    </location>
    <ligand>
        <name>L-ornithine</name>
        <dbReference type="ChEBI" id="CHEBI:46911"/>
    </ligand>
</feature>
<feature type="binding site" evidence="1">
    <location>
        <position position="262"/>
    </location>
    <ligand>
        <name>L-ornithine</name>
        <dbReference type="ChEBI" id="CHEBI:46911"/>
    </ligand>
</feature>
<feature type="binding site" evidence="1">
    <location>
        <position position="263"/>
    </location>
    <ligand>
        <name>L-ornithine</name>
        <dbReference type="ChEBI" id="CHEBI:46911"/>
    </ligand>
</feature>
<feature type="binding site" evidence="1">
    <location>
        <begin position="300"/>
        <end position="301"/>
    </location>
    <ligand>
        <name>carbamoyl phosphate</name>
        <dbReference type="ChEBI" id="CHEBI:58228"/>
    </ligand>
</feature>
<feature type="binding site" evidence="1">
    <location>
        <position position="328"/>
    </location>
    <ligand>
        <name>carbamoyl phosphate</name>
        <dbReference type="ChEBI" id="CHEBI:58228"/>
    </ligand>
</feature>
<organism>
    <name type="scientific">Pachysolen tannophilus</name>
    <name type="common">Yeast</name>
    <dbReference type="NCBI Taxonomy" id="4918"/>
    <lineage>
        <taxon>Eukaryota</taxon>
        <taxon>Fungi</taxon>
        <taxon>Dikarya</taxon>
        <taxon>Ascomycota</taxon>
        <taxon>Saccharomycotina</taxon>
        <taxon>Pichiomycetes</taxon>
        <taxon>Pachysolenaceae</taxon>
        <taxon>Pachysolen</taxon>
    </lineage>
</organism>
<proteinExistence type="inferred from homology"/>
<protein>
    <recommendedName>
        <fullName evidence="4">Ornithine transcarbamylase, mitochondrial</fullName>
        <shortName evidence="2">OTCase</shortName>
        <ecNumber evidence="1">2.1.3.3</ecNumber>
    </recommendedName>
    <alternativeName>
        <fullName>Ornithine carbamoyltransferase, mitochondrial</fullName>
    </alternativeName>
</protein>